<organism>
    <name type="scientific">Homo sapiens</name>
    <name type="common">Human</name>
    <dbReference type="NCBI Taxonomy" id="9606"/>
    <lineage>
        <taxon>Eukaryota</taxon>
        <taxon>Metazoa</taxon>
        <taxon>Chordata</taxon>
        <taxon>Craniata</taxon>
        <taxon>Vertebrata</taxon>
        <taxon>Euteleostomi</taxon>
        <taxon>Mammalia</taxon>
        <taxon>Eutheria</taxon>
        <taxon>Euarchontoglires</taxon>
        <taxon>Primates</taxon>
        <taxon>Haplorrhini</taxon>
        <taxon>Catarrhini</taxon>
        <taxon>Hominidae</taxon>
        <taxon>Homo</taxon>
    </lineage>
</organism>
<reference key="1">
    <citation type="journal article" date="1998" name="FEBS Lett.">
        <title>The product of the mammalian orthologue of the Saccharomyces cerevisiae HBS1 gene is phylogenetically related to eukaryotic release factor 3 (eRF3) but does not carry eRF3-like activity.</title>
        <authorList>
            <person name="Wallrapp C."/>
            <person name="Verrier S.-B."/>
            <person name="Zhouravleva G."/>
            <person name="Philippe H."/>
            <person name="Philippe M."/>
            <person name="Gress T.M."/>
            <person name="Jean-Jean O."/>
        </authorList>
    </citation>
    <scope>NUCLEOTIDE SEQUENCE [MRNA] (ISOFORM 1)</scope>
    <scope>TISSUE SPECIFICITY</scope>
    <source>
        <tissue>Pancreatic cancer</tissue>
    </source>
</reference>
<reference key="2">
    <citation type="thesis" date="2002" institute="University of Oxford" country="United Kingdom">
        <title>An integrated physical and transcript map of human 6q23 encompassing a quantitative trait loci for foetal haemaglobin expression.</title>
        <authorList>
            <person name="Close J.P."/>
            <person name="Game L.G."/>
            <person name="Clark B."/>
            <person name="Thein S.L."/>
        </authorList>
    </citation>
    <scope>NUCLEOTIDE SEQUENCE [MRNA] (ISOFORMS 1 AND 2)</scope>
</reference>
<reference key="3">
    <citation type="journal article" date="2004" name="Nat. Genet.">
        <title>Complete sequencing and characterization of 21,243 full-length human cDNAs.</title>
        <authorList>
            <person name="Ota T."/>
            <person name="Suzuki Y."/>
            <person name="Nishikawa T."/>
            <person name="Otsuki T."/>
            <person name="Sugiyama T."/>
            <person name="Irie R."/>
            <person name="Wakamatsu A."/>
            <person name="Hayashi K."/>
            <person name="Sato H."/>
            <person name="Nagai K."/>
            <person name="Kimura K."/>
            <person name="Makita H."/>
            <person name="Sekine M."/>
            <person name="Obayashi M."/>
            <person name="Nishi T."/>
            <person name="Shibahara T."/>
            <person name="Tanaka T."/>
            <person name="Ishii S."/>
            <person name="Yamamoto J."/>
            <person name="Saito K."/>
            <person name="Kawai Y."/>
            <person name="Isono Y."/>
            <person name="Nakamura Y."/>
            <person name="Nagahari K."/>
            <person name="Murakami K."/>
            <person name="Yasuda T."/>
            <person name="Iwayanagi T."/>
            <person name="Wagatsuma M."/>
            <person name="Shiratori A."/>
            <person name="Sudo H."/>
            <person name="Hosoiri T."/>
            <person name="Kaku Y."/>
            <person name="Kodaira H."/>
            <person name="Kondo H."/>
            <person name="Sugawara M."/>
            <person name="Takahashi M."/>
            <person name="Kanda K."/>
            <person name="Yokoi T."/>
            <person name="Furuya T."/>
            <person name="Kikkawa E."/>
            <person name="Omura Y."/>
            <person name="Abe K."/>
            <person name="Kamihara K."/>
            <person name="Katsuta N."/>
            <person name="Sato K."/>
            <person name="Tanikawa M."/>
            <person name="Yamazaki M."/>
            <person name="Ninomiya K."/>
            <person name="Ishibashi T."/>
            <person name="Yamashita H."/>
            <person name="Murakawa K."/>
            <person name="Fujimori K."/>
            <person name="Tanai H."/>
            <person name="Kimata M."/>
            <person name="Watanabe M."/>
            <person name="Hiraoka S."/>
            <person name="Chiba Y."/>
            <person name="Ishida S."/>
            <person name="Ono Y."/>
            <person name="Takiguchi S."/>
            <person name="Watanabe S."/>
            <person name="Yosida M."/>
            <person name="Hotuta T."/>
            <person name="Kusano J."/>
            <person name="Kanehori K."/>
            <person name="Takahashi-Fujii A."/>
            <person name="Hara H."/>
            <person name="Tanase T.-O."/>
            <person name="Nomura Y."/>
            <person name="Togiya S."/>
            <person name="Komai F."/>
            <person name="Hara R."/>
            <person name="Takeuchi K."/>
            <person name="Arita M."/>
            <person name="Imose N."/>
            <person name="Musashino K."/>
            <person name="Yuuki H."/>
            <person name="Oshima A."/>
            <person name="Sasaki N."/>
            <person name="Aotsuka S."/>
            <person name="Yoshikawa Y."/>
            <person name="Matsunawa H."/>
            <person name="Ichihara T."/>
            <person name="Shiohata N."/>
            <person name="Sano S."/>
            <person name="Moriya S."/>
            <person name="Momiyama H."/>
            <person name="Satoh N."/>
            <person name="Takami S."/>
            <person name="Terashima Y."/>
            <person name="Suzuki O."/>
            <person name="Nakagawa S."/>
            <person name="Senoh A."/>
            <person name="Mizoguchi H."/>
            <person name="Goto Y."/>
            <person name="Shimizu F."/>
            <person name="Wakebe H."/>
            <person name="Hishigaki H."/>
            <person name="Watanabe T."/>
            <person name="Sugiyama A."/>
            <person name="Takemoto M."/>
            <person name="Kawakami B."/>
            <person name="Yamazaki M."/>
            <person name="Watanabe K."/>
            <person name="Kumagai A."/>
            <person name="Itakura S."/>
            <person name="Fukuzumi Y."/>
            <person name="Fujimori Y."/>
            <person name="Komiyama M."/>
            <person name="Tashiro H."/>
            <person name="Tanigami A."/>
            <person name="Fujiwara T."/>
            <person name="Ono T."/>
            <person name="Yamada K."/>
            <person name="Fujii Y."/>
            <person name="Ozaki K."/>
            <person name="Hirao M."/>
            <person name="Ohmori Y."/>
            <person name="Kawabata A."/>
            <person name="Hikiji T."/>
            <person name="Kobatake N."/>
            <person name="Inagaki H."/>
            <person name="Ikema Y."/>
            <person name="Okamoto S."/>
            <person name="Okitani R."/>
            <person name="Kawakami T."/>
            <person name="Noguchi S."/>
            <person name="Itoh T."/>
            <person name="Shigeta K."/>
            <person name="Senba T."/>
            <person name="Matsumura K."/>
            <person name="Nakajima Y."/>
            <person name="Mizuno T."/>
            <person name="Morinaga M."/>
            <person name="Sasaki M."/>
            <person name="Togashi T."/>
            <person name="Oyama M."/>
            <person name="Hata H."/>
            <person name="Watanabe M."/>
            <person name="Komatsu T."/>
            <person name="Mizushima-Sugano J."/>
            <person name="Satoh T."/>
            <person name="Shirai Y."/>
            <person name="Takahashi Y."/>
            <person name="Nakagawa K."/>
            <person name="Okumura K."/>
            <person name="Nagase T."/>
            <person name="Nomura N."/>
            <person name="Kikuchi H."/>
            <person name="Masuho Y."/>
            <person name="Yamashita R."/>
            <person name="Nakai K."/>
            <person name="Yada T."/>
            <person name="Nakamura Y."/>
            <person name="Ohara O."/>
            <person name="Isogai T."/>
            <person name="Sugano S."/>
        </authorList>
    </citation>
    <scope>NUCLEOTIDE SEQUENCE [LARGE SCALE MRNA] (ISOFORM 3)</scope>
    <source>
        <tissue>Hippocampus</tissue>
    </source>
</reference>
<reference key="4">
    <citation type="journal article" date="2003" name="Nature">
        <title>The DNA sequence and analysis of human chromosome 6.</title>
        <authorList>
            <person name="Mungall A.J."/>
            <person name="Palmer S.A."/>
            <person name="Sims S.K."/>
            <person name="Edwards C.A."/>
            <person name="Ashurst J.L."/>
            <person name="Wilming L."/>
            <person name="Jones M.C."/>
            <person name="Horton R."/>
            <person name="Hunt S.E."/>
            <person name="Scott C.E."/>
            <person name="Gilbert J.G.R."/>
            <person name="Clamp M.E."/>
            <person name="Bethel G."/>
            <person name="Milne S."/>
            <person name="Ainscough R."/>
            <person name="Almeida J.P."/>
            <person name="Ambrose K.D."/>
            <person name="Andrews T.D."/>
            <person name="Ashwell R.I.S."/>
            <person name="Babbage A.K."/>
            <person name="Bagguley C.L."/>
            <person name="Bailey J."/>
            <person name="Banerjee R."/>
            <person name="Barker D.J."/>
            <person name="Barlow K.F."/>
            <person name="Bates K."/>
            <person name="Beare D.M."/>
            <person name="Beasley H."/>
            <person name="Beasley O."/>
            <person name="Bird C.P."/>
            <person name="Blakey S.E."/>
            <person name="Bray-Allen S."/>
            <person name="Brook J."/>
            <person name="Brown A.J."/>
            <person name="Brown J.Y."/>
            <person name="Burford D.C."/>
            <person name="Burrill W."/>
            <person name="Burton J."/>
            <person name="Carder C."/>
            <person name="Carter N.P."/>
            <person name="Chapman J.C."/>
            <person name="Clark S.Y."/>
            <person name="Clark G."/>
            <person name="Clee C.M."/>
            <person name="Clegg S."/>
            <person name="Cobley V."/>
            <person name="Collier R.E."/>
            <person name="Collins J.E."/>
            <person name="Colman L.K."/>
            <person name="Corby N.R."/>
            <person name="Coville G.J."/>
            <person name="Culley K.M."/>
            <person name="Dhami P."/>
            <person name="Davies J."/>
            <person name="Dunn M."/>
            <person name="Earthrowl M.E."/>
            <person name="Ellington A.E."/>
            <person name="Evans K.A."/>
            <person name="Faulkner L."/>
            <person name="Francis M.D."/>
            <person name="Frankish A."/>
            <person name="Frankland J."/>
            <person name="French L."/>
            <person name="Garner P."/>
            <person name="Garnett J."/>
            <person name="Ghori M.J."/>
            <person name="Gilby L.M."/>
            <person name="Gillson C.J."/>
            <person name="Glithero R.J."/>
            <person name="Grafham D.V."/>
            <person name="Grant M."/>
            <person name="Gribble S."/>
            <person name="Griffiths C."/>
            <person name="Griffiths M.N.D."/>
            <person name="Hall R."/>
            <person name="Halls K.S."/>
            <person name="Hammond S."/>
            <person name="Harley J.L."/>
            <person name="Hart E.A."/>
            <person name="Heath P.D."/>
            <person name="Heathcott R."/>
            <person name="Holmes S.J."/>
            <person name="Howden P.J."/>
            <person name="Howe K.L."/>
            <person name="Howell G.R."/>
            <person name="Huckle E."/>
            <person name="Humphray S.J."/>
            <person name="Humphries M.D."/>
            <person name="Hunt A.R."/>
            <person name="Johnson C.M."/>
            <person name="Joy A.A."/>
            <person name="Kay M."/>
            <person name="Keenan S.J."/>
            <person name="Kimberley A.M."/>
            <person name="King A."/>
            <person name="Laird G.K."/>
            <person name="Langford C."/>
            <person name="Lawlor S."/>
            <person name="Leongamornlert D.A."/>
            <person name="Leversha M."/>
            <person name="Lloyd C.R."/>
            <person name="Lloyd D.M."/>
            <person name="Loveland J.E."/>
            <person name="Lovell J."/>
            <person name="Martin S."/>
            <person name="Mashreghi-Mohammadi M."/>
            <person name="Maslen G.L."/>
            <person name="Matthews L."/>
            <person name="McCann O.T."/>
            <person name="McLaren S.J."/>
            <person name="McLay K."/>
            <person name="McMurray A."/>
            <person name="Moore M.J.F."/>
            <person name="Mullikin J.C."/>
            <person name="Niblett D."/>
            <person name="Nickerson T."/>
            <person name="Novik K.L."/>
            <person name="Oliver K."/>
            <person name="Overton-Larty E.K."/>
            <person name="Parker A."/>
            <person name="Patel R."/>
            <person name="Pearce A.V."/>
            <person name="Peck A.I."/>
            <person name="Phillimore B.J.C.T."/>
            <person name="Phillips S."/>
            <person name="Plumb R.W."/>
            <person name="Porter K.M."/>
            <person name="Ramsey Y."/>
            <person name="Ranby S.A."/>
            <person name="Rice C.M."/>
            <person name="Ross M.T."/>
            <person name="Searle S.M."/>
            <person name="Sehra H.K."/>
            <person name="Sheridan E."/>
            <person name="Skuce C.D."/>
            <person name="Smith S."/>
            <person name="Smith M."/>
            <person name="Spraggon L."/>
            <person name="Squares S.L."/>
            <person name="Steward C.A."/>
            <person name="Sycamore N."/>
            <person name="Tamlyn-Hall G."/>
            <person name="Tester J."/>
            <person name="Theaker A.J."/>
            <person name="Thomas D.W."/>
            <person name="Thorpe A."/>
            <person name="Tracey A."/>
            <person name="Tromans A."/>
            <person name="Tubby B."/>
            <person name="Wall M."/>
            <person name="Wallis J.M."/>
            <person name="West A.P."/>
            <person name="White S.S."/>
            <person name="Whitehead S.L."/>
            <person name="Whittaker H."/>
            <person name="Wild A."/>
            <person name="Willey D.J."/>
            <person name="Wilmer T.E."/>
            <person name="Wood J.M."/>
            <person name="Wray P.W."/>
            <person name="Wyatt J.C."/>
            <person name="Young L."/>
            <person name="Younger R.M."/>
            <person name="Bentley D.R."/>
            <person name="Coulson A."/>
            <person name="Durbin R.M."/>
            <person name="Hubbard T."/>
            <person name="Sulston J.E."/>
            <person name="Dunham I."/>
            <person name="Rogers J."/>
            <person name="Beck S."/>
        </authorList>
    </citation>
    <scope>NUCLEOTIDE SEQUENCE [LARGE SCALE GENOMIC DNA]</scope>
</reference>
<reference key="5">
    <citation type="submission" date="2005-09" db="EMBL/GenBank/DDBJ databases">
        <authorList>
            <person name="Mural R.J."/>
            <person name="Istrail S."/>
            <person name="Sutton G.G."/>
            <person name="Florea L."/>
            <person name="Halpern A.L."/>
            <person name="Mobarry C.M."/>
            <person name="Lippert R."/>
            <person name="Walenz B."/>
            <person name="Shatkay H."/>
            <person name="Dew I."/>
            <person name="Miller J.R."/>
            <person name="Flanigan M.J."/>
            <person name="Edwards N.J."/>
            <person name="Bolanos R."/>
            <person name="Fasulo D."/>
            <person name="Halldorsson B.V."/>
            <person name="Hannenhalli S."/>
            <person name="Turner R."/>
            <person name="Yooseph S."/>
            <person name="Lu F."/>
            <person name="Nusskern D.R."/>
            <person name="Shue B.C."/>
            <person name="Zheng X.H."/>
            <person name="Zhong F."/>
            <person name="Delcher A.L."/>
            <person name="Huson D.H."/>
            <person name="Kravitz S.A."/>
            <person name="Mouchard L."/>
            <person name="Reinert K."/>
            <person name="Remington K.A."/>
            <person name="Clark A.G."/>
            <person name="Waterman M.S."/>
            <person name="Eichler E.E."/>
            <person name="Adams M.D."/>
            <person name="Hunkapiller M.W."/>
            <person name="Myers E.W."/>
            <person name="Venter J.C."/>
        </authorList>
    </citation>
    <scope>NUCLEOTIDE SEQUENCE [LARGE SCALE GENOMIC DNA]</scope>
</reference>
<reference key="6">
    <citation type="journal article" date="2004" name="Genome Res.">
        <title>The status, quality, and expansion of the NIH full-length cDNA project: the Mammalian Gene Collection (MGC).</title>
        <authorList>
            <consortium name="The MGC Project Team"/>
        </authorList>
    </citation>
    <scope>NUCLEOTIDE SEQUENCE [LARGE SCALE MRNA] (ISOFORM 1)</scope>
    <source>
        <tissue>Cervix</tissue>
        <tissue>Placenta</tissue>
    </source>
</reference>
<reference key="7">
    <citation type="journal article" date="1999" name="DNA Res.">
        <title>Prediction of the coding sequences of unidentified human genes. XIV. The complete sequences of 100 new cDNA clones from brain which code for large proteins in vitro.</title>
        <authorList>
            <person name="Kikuno R."/>
            <person name="Nagase T."/>
            <person name="Ishikawa K."/>
            <person name="Hirosawa M."/>
            <person name="Miyajima N."/>
            <person name="Tanaka A."/>
            <person name="Kotani H."/>
            <person name="Nomura N."/>
            <person name="Ohara O."/>
        </authorList>
    </citation>
    <scope>NUCLEOTIDE SEQUENCE [LARGE SCALE MRNA] OF 189-684 (ISOFORMS 1/3)</scope>
    <source>
        <tissue>Brain</tissue>
    </source>
</reference>
<reference key="8">
    <citation type="journal article" date="2008" name="Proc. Natl. Acad. Sci. U.S.A.">
        <title>A quantitative atlas of mitotic phosphorylation.</title>
        <authorList>
            <person name="Dephoure N."/>
            <person name="Zhou C."/>
            <person name="Villen J."/>
            <person name="Beausoleil S.A."/>
            <person name="Bakalarski C.E."/>
            <person name="Elledge S.J."/>
            <person name="Gygi S.P."/>
        </authorList>
    </citation>
    <scope>IDENTIFICATION BY MASS SPECTROMETRY [LARGE SCALE ANALYSIS]</scope>
    <source>
        <tissue>Cervix carcinoma</tissue>
    </source>
</reference>
<reference key="9">
    <citation type="journal article" date="2009" name="Sci. Signal.">
        <title>Quantitative phosphoproteomic analysis of T cell receptor signaling reveals system-wide modulation of protein-protein interactions.</title>
        <authorList>
            <person name="Mayya V."/>
            <person name="Lundgren D.H."/>
            <person name="Hwang S.-I."/>
            <person name="Rezaul K."/>
            <person name="Wu L."/>
            <person name="Eng J.K."/>
            <person name="Rodionov V."/>
            <person name="Han D.K."/>
        </authorList>
    </citation>
    <scope>PHOSPHORYLATION [LARGE SCALE ANALYSIS] AT SER-246 (ISOFORM 2)</scope>
    <scope>IDENTIFICATION BY MASS SPECTROMETRY [LARGE SCALE ANALYSIS]</scope>
    <source>
        <tissue>Leukemic T-cell</tissue>
    </source>
</reference>
<reference key="10">
    <citation type="journal article" date="2010" name="Sci. Signal.">
        <title>Quantitative phosphoproteomics reveals widespread full phosphorylation site occupancy during mitosis.</title>
        <authorList>
            <person name="Olsen J.V."/>
            <person name="Vermeulen M."/>
            <person name="Santamaria A."/>
            <person name="Kumar C."/>
            <person name="Miller M.L."/>
            <person name="Jensen L.J."/>
            <person name="Gnad F."/>
            <person name="Cox J."/>
            <person name="Jensen T.S."/>
            <person name="Nigg E.A."/>
            <person name="Brunak S."/>
            <person name="Mann M."/>
        </authorList>
    </citation>
    <scope>PHOSPHORYLATION [LARGE SCALE ANALYSIS] AT SER-117 AND SER-127</scope>
    <scope>IDENTIFICATION BY MASS SPECTROMETRY [LARGE SCALE ANALYSIS]</scope>
    <source>
        <tissue>Cervix carcinoma</tissue>
    </source>
</reference>
<reference key="11">
    <citation type="journal article" date="2011" name="BMC Syst. Biol.">
        <title>Initial characterization of the human central proteome.</title>
        <authorList>
            <person name="Burkard T.R."/>
            <person name="Planyavsky M."/>
            <person name="Kaupe I."/>
            <person name="Breitwieser F.P."/>
            <person name="Buerckstuemmer T."/>
            <person name="Bennett K.L."/>
            <person name="Superti-Furga G."/>
            <person name="Colinge J."/>
        </authorList>
    </citation>
    <scope>IDENTIFICATION BY MASS SPECTROMETRY [LARGE SCALE ANALYSIS]</scope>
</reference>
<reference key="12">
    <citation type="journal article" date="2011" name="EMBO J.">
        <title>Dissociation by Pelota, Hbs1 and ABCE1 of mammalian vacant 80S ribosomes and stalled elongation complexes.</title>
        <authorList>
            <person name="Pisareva V.P."/>
            <person name="Skabkin M.A."/>
            <person name="Hellen C.U."/>
            <person name="Pestova T.V."/>
            <person name="Pisarev A.V."/>
        </authorList>
    </citation>
    <scope>FUNCTION</scope>
    <scope>SUBCELLULAR LOCATION</scope>
</reference>
<reference key="13">
    <citation type="journal article" date="2011" name="Sci. Signal.">
        <title>System-wide temporal characterization of the proteome and phosphoproteome of human embryonic stem cell differentiation.</title>
        <authorList>
            <person name="Rigbolt K.T."/>
            <person name="Prokhorova T.A."/>
            <person name="Akimov V."/>
            <person name="Henningsen J."/>
            <person name="Johansen P.T."/>
            <person name="Kratchmarova I."/>
            <person name="Kassem M."/>
            <person name="Mann M."/>
            <person name="Olsen J.V."/>
            <person name="Blagoev B."/>
        </authorList>
    </citation>
    <scope>IDENTIFICATION BY MASS SPECTROMETRY [LARGE SCALE ANALYSIS]</scope>
</reference>
<reference key="14">
    <citation type="journal article" date="2013" name="Blood">
        <title>Rare complete loss of function provides insight into a pleiotropic genome-wide association study locus.</title>
        <authorList>
            <person name="Sankaran V.G."/>
            <person name="Joshi M."/>
            <person name="Agrawal A."/>
            <person name="Schmitz-Abe K."/>
            <person name="Towne M.C."/>
            <person name="Marinakis N."/>
            <person name="Markianos K."/>
            <person name="Berry G.T."/>
            <person name="Agrawal P.B."/>
        </authorList>
    </citation>
    <scope>VARIANT 615-ARG--GLU-684 DEL</scope>
</reference>
<reference key="15">
    <citation type="journal article" date="2013" name="J. Biol. Chem.">
        <title>The Hbs1-Dom34 protein complex functions in non-stop mRNA decay in mammalian cells.</title>
        <authorList>
            <person name="Saito S."/>
            <person name="Hosoda N."/>
            <person name="Hoshino S."/>
        </authorList>
    </citation>
    <scope>FUNCTION</scope>
</reference>
<reference key="16">
    <citation type="journal article" date="2013" name="J. Proteome Res.">
        <title>Toward a comprehensive characterization of a human cancer cell phosphoproteome.</title>
        <authorList>
            <person name="Zhou H."/>
            <person name="Di Palma S."/>
            <person name="Preisinger C."/>
            <person name="Peng M."/>
            <person name="Polat A.N."/>
            <person name="Heck A.J."/>
            <person name="Mohammed S."/>
        </authorList>
    </citation>
    <scope>PHOSPHORYLATION [LARGE SCALE ANALYSIS] AT SER-49; SER-67; SER-127; SER-154 AND THR-231</scope>
    <scope>IDENTIFICATION BY MASS SPECTROMETRY [LARGE SCALE ANALYSIS]</scope>
    <source>
        <tissue>Cervix carcinoma</tissue>
        <tissue>Erythroleukemia</tissue>
    </source>
</reference>
<reference key="17">
    <citation type="journal article" date="2017" name="Nucleic Acids Res.">
        <title>A short splicing isoform of HBS1L links the cytoplasmic exosome and SKI complexes in humans.</title>
        <authorList>
            <person name="Kalisiak K."/>
            <person name="Kulinski T.M."/>
            <person name="Tomecki R."/>
            <person name="Cysewski D."/>
            <person name="Pietras Z."/>
            <person name="Chlebowski A."/>
            <person name="Kowalska K."/>
            <person name="Dziembowski A."/>
        </authorList>
    </citation>
    <scope>FUNCTION (ISOFORM 2)</scope>
    <scope>ASSOCIATION WITH THE SKI COMPLEX</scope>
    <scope>ASSOCIATION WITH THE EXOSOME COMPLEX AND SKI COMPLEX (ISOFORM 2)</scope>
    <scope>INTERACTION WITH SKIC2 AND EXOSC3 (ISOFORM 2)</scope>
    <scope>SUBCELLULAR LOCATION (ISOFORM 2)</scope>
</reference>
<reference key="18">
    <citation type="journal article" date="2020" name="Mol. Cell">
        <title>Extraction of mRNA from stalled ribosomes by the Ski complex.</title>
        <authorList>
            <person name="Zinoviev A."/>
            <person name="Ayupov R.K."/>
            <person name="Abaeva I.S."/>
            <person name="Hellen C.U.T."/>
            <person name="Pestova T.V."/>
        </authorList>
    </citation>
    <scope>FUNCTION</scope>
</reference>
<reference key="19">
    <citation type="journal article" date="2019" name="PLoS Genet.">
        <title>Mammalian Hbs1L deficiency causes congenital anomalies and developmental delay associated with Pelota depletion and 80S monosome accumulation.</title>
        <authorList>
            <person name="O'Connell A.E."/>
            <person name="Gerashchenko M.V."/>
            <person name="O'Donohue M.F."/>
            <person name="Rosen S.M."/>
            <person name="Huntzinger E."/>
            <person name="Gleeson D."/>
            <person name="Galli A."/>
            <person name="Ryder E."/>
            <person name="Cao S."/>
            <person name="Murphy Q."/>
            <person name="Kazerounian S."/>
            <person name="Morton S.U."/>
            <person name="Schmitz-Abe K."/>
            <person name="Gladyshev V.N."/>
            <person name="Gleizes P.E."/>
            <person name="Seraphin B."/>
            <person name="Agrawal P.B."/>
        </authorList>
    </citation>
    <scope>VARIANT 615-ARG--GLU-684 DEL</scope>
</reference>
<reference evidence="22 23 24 25" key="20">
    <citation type="journal article" date="2016" name="Cell">
        <title>Decoding mammalian ribosome-mRNA states by translational GTPase complexes.</title>
        <authorList>
            <person name="Shao S."/>
            <person name="Murray J."/>
            <person name="Brown A."/>
            <person name="Taunton J."/>
            <person name="Ramakrishnan V."/>
            <person name="Hegde R.S."/>
        </authorList>
    </citation>
    <scope>STRUCTURE BY ELECTRON MICROSCOPY (3.47 ANGSTROMS) IN COMPLEX WITH CTP; PELO AND STALLED RIBOSOME</scope>
    <scope>FUNCTION</scope>
    <scope>IDENTIFICATION IN THE PELOTA-HBS1L COMPLEX</scope>
</reference>
<dbReference type="EC" id="3.6.5.-" evidence="1"/>
<dbReference type="EMBL" id="U87791">
    <property type="protein sequence ID" value="AAD00645.1"/>
    <property type="molecule type" value="mRNA"/>
</dbReference>
<dbReference type="EMBL" id="AJ459826">
    <property type="protein sequence ID" value="CAD30873.1"/>
    <property type="molecule type" value="mRNA"/>
</dbReference>
<dbReference type="EMBL" id="AJ459827">
    <property type="protein sequence ID" value="CAD30874.1"/>
    <property type="molecule type" value="mRNA"/>
</dbReference>
<dbReference type="EMBL" id="AK295545">
    <property type="protein sequence ID" value="BAH12101.1"/>
    <property type="molecule type" value="mRNA"/>
</dbReference>
<dbReference type="EMBL" id="AL353596">
    <property type="status" value="NOT_ANNOTATED_CDS"/>
    <property type="molecule type" value="Genomic_DNA"/>
</dbReference>
<dbReference type="EMBL" id="AL445190">
    <property type="status" value="NOT_ANNOTATED_CDS"/>
    <property type="molecule type" value="Genomic_DNA"/>
</dbReference>
<dbReference type="EMBL" id="CH471051">
    <property type="protein sequence ID" value="EAW47982.1"/>
    <property type="molecule type" value="Genomic_DNA"/>
</dbReference>
<dbReference type="EMBL" id="BC001465">
    <property type="protein sequence ID" value="AAH01465.1"/>
    <property type="molecule type" value="mRNA"/>
</dbReference>
<dbReference type="EMBL" id="BC040849">
    <property type="protein sequence ID" value="AAH40849.1"/>
    <property type="molecule type" value="mRNA"/>
</dbReference>
<dbReference type="EMBL" id="AB028961">
    <property type="protein sequence ID" value="BAA82990.1"/>
    <property type="molecule type" value="mRNA"/>
</dbReference>
<dbReference type="CCDS" id="CCDS47479.1">
    <molecule id="Q9Y450-4"/>
</dbReference>
<dbReference type="CCDS" id="CCDS47480.1">
    <molecule id="Q9Y450-2"/>
</dbReference>
<dbReference type="CCDS" id="CCDS5173.1">
    <molecule id="Q9Y450-1"/>
</dbReference>
<dbReference type="RefSeq" id="NP_001138630.1">
    <molecule id="Q9Y450-4"/>
    <property type="nucleotide sequence ID" value="NM_001145158.2"/>
</dbReference>
<dbReference type="RefSeq" id="NP_001138679.1">
    <molecule id="Q9Y450-2"/>
    <property type="nucleotide sequence ID" value="NM_001145207.2"/>
</dbReference>
<dbReference type="RefSeq" id="NP_006611.1">
    <molecule id="Q9Y450-1"/>
    <property type="nucleotide sequence ID" value="NM_006620.4"/>
</dbReference>
<dbReference type="PDB" id="5LZW">
    <property type="method" value="EM"/>
    <property type="resolution" value="3.53 A"/>
    <property type="chains" value="jj=1-684"/>
</dbReference>
<dbReference type="PDB" id="5LZX">
    <property type="method" value="EM"/>
    <property type="resolution" value="3.67 A"/>
    <property type="chains" value="jj=1-684"/>
</dbReference>
<dbReference type="PDB" id="5LZY">
    <property type="method" value="EM"/>
    <property type="resolution" value="3.99 A"/>
    <property type="chains" value="jj=1-684"/>
</dbReference>
<dbReference type="PDB" id="5LZZ">
    <property type="method" value="EM"/>
    <property type="resolution" value="3.47 A"/>
    <property type="chains" value="jj=1-684"/>
</dbReference>
<dbReference type="PDB" id="9G8M">
    <property type="method" value="EM"/>
    <property type="resolution" value="3.30 A"/>
    <property type="chains" value="E=123-234"/>
</dbReference>
<dbReference type="PDB" id="9G8N">
    <property type="method" value="EM"/>
    <property type="resolution" value="3.70 A"/>
    <property type="chains" value="E=123-234"/>
</dbReference>
<dbReference type="PDB" id="9G8O">
    <property type="method" value="EM"/>
    <property type="resolution" value="3.40 A"/>
    <property type="chains" value="E=123-234"/>
</dbReference>
<dbReference type="PDB" id="9G8P">
    <property type="method" value="EM"/>
    <property type="resolution" value="7.00 A"/>
    <property type="chains" value="E=123-234"/>
</dbReference>
<dbReference type="PDB" id="9G8R">
    <property type="method" value="EM"/>
    <property type="resolution" value="3.40 A"/>
    <property type="chains" value="E=123-234"/>
</dbReference>
<dbReference type="PDBsum" id="5LZW"/>
<dbReference type="PDBsum" id="5LZX"/>
<dbReference type="PDBsum" id="5LZY"/>
<dbReference type="PDBsum" id="5LZZ"/>
<dbReference type="PDBsum" id="9G8M"/>
<dbReference type="PDBsum" id="9G8N"/>
<dbReference type="PDBsum" id="9G8O"/>
<dbReference type="PDBsum" id="9G8P"/>
<dbReference type="PDBsum" id="9G8R"/>
<dbReference type="EMDB" id="EMD-4134"/>
<dbReference type="EMDB" id="EMD-4135"/>
<dbReference type="EMDB" id="EMD-4136"/>
<dbReference type="EMDB" id="EMD-4137"/>
<dbReference type="EMDB" id="EMD-51132"/>
<dbReference type="EMDB" id="EMD-51133"/>
<dbReference type="EMDB" id="EMD-51134"/>
<dbReference type="EMDB" id="EMD-51135"/>
<dbReference type="EMDB" id="EMD-51137"/>
<dbReference type="SMR" id="Q9Y450"/>
<dbReference type="BioGRID" id="115986">
    <property type="interactions" value="132"/>
</dbReference>
<dbReference type="FunCoup" id="Q9Y450">
    <property type="interactions" value="1710"/>
</dbReference>
<dbReference type="IntAct" id="Q9Y450">
    <property type="interactions" value="81"/>
</dbReference>
<dbReference type="MINT" id="Q9Y450"/>
<dbReference type="STRING" id="9606.ENSP00000356811"/>
<dbReference type="GlyCosmos" id="Q9Y450">
    <property type="glycosylation" value="1 site, 1 glycan"/>
</dbReference>
<dbReference type="GlyGen" id="Q9Y450">
    <property type="glycosylation" value="3 sites, 1 O-linked glycan (3 sites)"/>
</dbReference>
<dbReference type="iPTMnet" id="Q9Y450"/>
<dbReference type="MetOSite" id="Q9Y450"/>
<dbReference type="PhosphoSitePlus" id="Q9Y450"/>
<dbReference type="SwissPalm" id="Q9Y450"/>
<dbReference type="BioMuta" id="HBS1L"/>
<dbReference type="DMDM" id="68566500"/>
<dbReference type="jPOST" id="Q9Y450"/>
<dbReference type="MassIVE" id="Q9Y450"/>
<dbReference type="PaxDb" id="9606-ENSP00000356811"/>
<dbReference type="PeptideAtlas" id="Q9Y450"/>
<dbReference type="ProteomicsDB" id="86102">
    <molecule id="Q9Y450-1"/>
</dbReference>
<dbReference type="ProteomicsDB" id="86103">
    <molecule id="Q9Y450-2"/>
</dbReference>
<dbReference type="ProteomicsDB" id="86104">
    <molecule id="Q9Y450-4"/>
</dbReference>
<dbReference type="Pumba" id="Q9Y450"/>
<dbReference type="Antibodypedia" id="32972">
    <property type="antibodies" value="391 antibodies from 26 providers"/>
</dbReference>
<dbReference type="DNASU" id="10767"/>
<dbReference type="Ensembl" id="ENST00000367822.9">
    <molecule id="Q9Y450-2"/>
    <property type="protein sequence ID" value="ENSP00000356796.5"/>
    <property type="gene ID" value="ENSG00000112339.15"/>
</dbReference>
<dbReference type="Ensembl" id="ENST00000367826.6">
    <molecule id="Q9Y450-4"/>
    <property type="protein sequence ID" value="ENSP00000356800.2"/>
    <property type="gene ID" value="ENSG00000112339.15"/>
</dbReference>
<dbReference type="Ensembl" id="ENST00000367837.10">
    <molecule id="Q9Y450-1"/>
    <property type="protein sequence ID" value="ENSP00000356811.5"/>
    <property type="gene ID" value="ENSG00000112339.15"/>
</dbReference>
<dbReference type="GeneID" id="10767"/>
<dbReference type="KEGG" id="hsa:10767"/>
<dbReference type="MANE-Select" id="ENST00000367837.10">
    <property type="protein sequence ID" value="ENSP00000356811.5"/>
    <property type="RefSeq nucleotide sequence ID" value="NM_006620.4"/>
    <property type="RefSeq protein sequence ID" value="NP_006611.1"/>
</dbReference>
<dbReference type="UCSC" id="uc003qez.4">
    <molecule id="Q9Y450-1"/>
    <property type="organism name" value="human"/>
</dbReference>
<dbReference type="AGR" id="HGNC:4834"/>
<dbReference type="CTD" id="10767"/>
<dbReference type="DisGeNET" id="10767"/>
<dbReference type="GeneCards" id="HBS1L"/>
<dbReference type="HGNC" id="HGNC:4834">
    <property type="gene designation" value="HBS1L"/>
</dbReference>
<dbReference type="HPA" id="ENSG00000112339">
    <property type="expression patterns" value="Low tissue specificity"/>
</dbReference>
<dbReference type="MIM" id="612450">
    <property type="type" value="gene"/>
</dbReference>
<dbReference type="neXtProt" id="NX_Q9Y450"/>
<dbReference type="OpenTargets" id="ENSG00000112339"/>
<dbReference type="PharmGKB" id="PA29209"/>
<dbReference type="VEuPathDB" id="HostDB:ENSG00000112339"/>
<dbReference type="eggNOG" id="KOG0458">
    <property type="taxonomic scope" value="Eukaryota"/>
</dbReference>
<dbReference type="GeneTree" id="ENSGT00940000156274"/>
<dbReference type="HOGENOM" id="CLU_432731_0_0_1"/>
<dbReference type="InParanoid" id="Q9Y450"/>
<dbReference type="OMA" id="VVQITCH"/>
<dbReference type="OrthoDB" id="342024at2759"/>
<dbReference type="PAN-GO" id="Q9Y450">
    <property type="GO annotations" value="2 GO annotations based on evolutionary models"/>
</dbReference>
<dbReference type="PhylomeDB" id="Q9Y450"/>
<dbReference type="TreeFam" id="TF105833"/>
<dbReference type="PathwayCommons" id="Q9Y450"/>
<dbReference type="Reactome" id="R-HSA-429958">
    <property type="pathway name" value="mRNA decay by 3' to 5' exoribonuclease"/>
</dbReference>
<dbReference type="SignaLink" id="Q9Y450"/>
<dbReference type="BioGRID-ORCS" id="10767">
    <property type="hits" value="108 hits in 1160 CRISPR screens"/>
</dbReference>
<dbReference type="ChiTaRS" id="HBS1L">
    <property type="organism name" value="human"/>
</dbReference>
<dbReference type="GenomeRNAi" id="10767"/>
<dbReference type="Pharos" id="Q9Y450">
    <property type="development level" value="Tbio"/>
</dbReference>
<dbReference type="PRO" id="PR:Q9Y450"/>
<dbReference type="Proteomes" id="UP000005640">
    <property type="component" value="Chromosome 6"/>
</dbReference>
<dbReference type="RNAct" id="Q9Y450">
    <property type="molecule type" value="protein"/>
</dbReference>
<dbReference type="Bgee" id="ENSG00000112339">
    <property type="expression patterns" value="Expressed in calcaneal tendon and 204 other cell types or tissues"/>
</dbReference>
<dbReference type="ExpressionAtlas" id="Q9Y450">
    <property type="expression patterns" value="baseline and differential"/>
</dbReference>
<dbReference type="GO" id="GO:0005829">
    <property type="term" value="C:cytosol"/>
    <property type="evidence" value="ECO:0000304"/>
    <property type="project" value="Reactome"/>
</dbReference>
<dbReference type="GO" id="GO:0022626">
    <property type="term" value="C:cytosolic ribosome"/>
    <property type="evidence" value="ECO:0000314"/>
    <property type="project" value="UniProt"/>
</dbReference>
<dbReference type="GO" id="GO:1990533">
    <property type="term" value="C:Dom34-Hbs1 complex"/>
    <property type="evidence" value="ECO:0000314"/>
    <property type="project" value="UniProtKB"/>
</dbReference>
<dbReference type="GO" id="GO:0070062">
    <property type="term" value="C:extracellular exosome"/>
    <property type="evidence" value="ECO:0007005"/>
    <property type="project" value="UniProtKB"/>
</dbReference>
<dbReference type="GO" id="GO:0016020">
    <property type="term" value="C:membrane"/>
    <property type="evidence" value="ECO:0007005"/>
    <property type="project" value="UniProtKB"/>
</dbReference>
<dbReference type="GO" id="GO:0005525">
    <property type="term" value="F:GTP binding"/>
    <property type="evidence" value="ECO:0000304"/>
    <property type="project" value="ProtInc"/>
</dbReference>
<dbReference type="GO" id="GO:0003924">
    <property type="term" value="F:GTPase activity"/>
    <property type="evidence" value="ECO:0000250"/>
    <property type="project" value="UniProt"/>
</dbReference>
<dbReference type="GO" id="GO:0003746">
    <property type="term" value="F:translation elongation factor activity"/>
    <property type="evidence" value="ECO:0007669"/>
    <property type="project" value="UniProtKB-KW"/>
</dbReference>
<dbReference type="GO" id="GO:0070966">
    <property type="term" value="P:nuclear-transcribed mRNA catabolic process, no-go decay"/>
    <property type="evidence" value="ECO:0000314"/>
    <property type="project" value="UniProtKB"/>
</dbReference>
<dbReference type="GO" id="GO:0006417">
    <property type="term" value="P:regulation of translation"/>
    <property type="evidence" value="ECO:0007669"/>
    <property type="project" value="UniProtKB-KW"/>
</dbReference>
<dbReference type="GO" id="GO:0072344">
    <property type="term" value="P:rescue of stalled ribosome"/>
    <property type="evidence" value="ECO:0000314"/>
    <property type="project" value="UniProtKB"/>
</dbReference>
<dbReference type="GO" id="GO:0032790">
    <property type="term" value="P:ribosome disassembly"/>
    <property type="evidence" value="ECO:0000314"/>
    <property type="project" value="UniProtKB"/>
</dbReference>
<dbReference type="GO" id="GO:0007165">
    <property type="term" value="P:signal transduction"/>
    <property type="evidence" value="ECO:0000304"/>
    <property type="project" value="ProtInc"/>
</dbReference>
<dbReference type="GO" id="GO:0006412">
    <property type="term" value="P:translation"/>
    <property type="evidence" value="ECO:0000318"/>
    <property type="project" value="GO_Central"/>
</dbReference>
<dbReference type="CDD" id="cd01883">
    <property type="entry name" value="EF1_alpha"/>
    <property type="match status" value="1"/>
</dbReference>
<dbReference type="CDD" id="cd16267">
    <property type="entry name" value="HBS1-like_II"/>
    <property type="match status" value="1"/>
</dbReference>
<dbReference type="CDD" id="cd04093">
    <property type="entry name" value="HBS1_C_III"/>
    <property type="match status" value="1"/>
</dbReference>
<dbReference type="FunFam" id="1.10.8.10:FF:000039">
    <property type="entry name" value="HBS1-like translational GTPase"/>
    <property type="match status" value="1"/>
</dbReference>
<dbReference type="FunFam" id="2.40.30.10:FF:000035">
    <property type="entry name" value="HBS1-like translational GTPase"/>
    <property type="match status" value="1"/>
</dbReference>
<dbReference type="FunFam" id="2.40.30.10:FF:000020">
    <property type="entry name" value="Translation elongation factor EF-1"/>
    <property type="match status" value="1"/>
</dbReference>
<dbReference type="FunFam" id="3.40.50.300:FF:000204">
    <property type="entry name" value="Translation elongation factor Tu"/>
    <property type="match status" value="1"/>
</dbReference>
<dbReference type="Gene3D" id="1.10.8.10">
    <property type="entry name" value="DNA helicase RuvA subunit, C-terminal domain"/>
    <property type="match status" value="1"/>
</dbReference>
<dbReference type="Gene3D" id="3.40.50.300">
    <property type="entry name" value="P-loop containing nucleotide triphosphate hydrolases"/>
    <property type="match status" value="1"/>
</dbReference>
<dbReference type="Gene3D" id="2.40.30.10">
    <property type="entry name" value="Translation factors"/>
    <property type="match status" value="2"/>
</dbReference>
<dbReference type="InterPro" id="IPR004161">
    <property type="entry name" value="EFTu-like_2"/>
</dbReference>
<dbReference type="InterPro" id="IPR054696">
    <property type="entry name" value="GTP-eEF1A_C"/>
</dbReference>
<dbReference type="InterPro" id="IPR015033">
    <property type="entry name" value="HBS1-like_N"/>
</dbReference>
<dbReference type="InterPro" id="IPR037189">
    <property type="entry name" value="HBS1-like_N_sf"/>
</dbReference>
<dbReference type="InterPro" id="IPR027417">
    <property type="entry name" value="P-loop_NTPase"/>
</dbReference>
<dbReference type="InterPro" id="IPR000795">
    <property type="entry name" value="T_Tr_GTP-bd_dom"/>
</dbReference>
<dbReference type="InterPro" id="IPR050100">
    <property type="entry name" value="TRAFAC_GTPase_members"/>
</dbReference>
<dbReference type="InterPro" id="IPR009000">
    <property type="entry name" value="Transl_B-barrel_sf"/>
</dbReference>
<dbReference type="InterPro" id="IPR009001">
    <property type="entry name" value="Transl_elong_EF1A/Init_IF2_C"/>
</dbReference>
<dbReference type="PANTHER" id="PTHR23115">
    <property type="entry name" value="TRANSLATION FACTOR"/>
    <property type="match status" value="1"/>
</dbReference>
<dbReference type="Pfam" id="PF22594">
    <property type="entry name" value="GTP-eEF1A_C"/>
    <property type="match status" value="1"/>
</dbReference>
<dbReference type="Pfam" id="PF00009">
    <property type="entry name" value="GTP_EFTU"/>
    <property type="match status" value="1"/>
</dbReference>
<dbReference type="Pfam" id="PF03144">
    <property type="entry name" value="GTP_EFTU_D2"/>
    <property type="match status" value="1"/>
</dbReference>
<dbReference type="Pfam" id="PF08938">
    <property type="entry name" value="HBS1_N"/>
    <property type="match status" value="1"/>
</dbReference>
<dbReference type="PRINTS" id="PR00315">
    <property type="entry name" value="ELONGATNFCT"/>
</dbReference>
<dbReference type="SUPFAM" id="SSF50465">
    <property type="entry name" value="EF-Tu/eEF-1alpha/eIF2-gamma C-terminal domain"/>
    <property type="match status" value="1"/>
</dbReference>
<dbReference type="SUPFAM" id="SSF109732">
    <property type="entry name" value="HBS1-like domain"/>
    <property type="match status" value="1"/>
</dbReference>
<dbReference type="SUPFAM" id="SSF52540">
    <property type="entry name" value="P-loop containing nucleoside triphosphate hydrolases"/>
    <property type="match status" value="1"/>
</dbReference>
<dbReference type="SUPFAM" id="SSF50447">
    <property type="entry name" value="Translation proteins"/>
    <property type="match status" value="1"/>
</dbReference>
<dbReference type="PROSITE" id="PS51722">
    <property type="entry name" value="G_TR_2"/>
    <property type="match status" value="1"/>
</dbReference>
<sequence>MARHRNVRGYNYDEDFEDDDLYGQSVEDDYCISPSTAAQFIYSRRDKPSVEPVEEYDYEDLKESSNSVSNHQLSGFDQARLYSCLDHMREVLGDAVPDEILIEAVLKNKFDVQKALSGVLEQDRVQSLKDKNEATVSTGKIAKGKPVDSQTSRSESEIVPKVAKMTVSGKKQTMGFEVPGVSSEENGHSFHTPQKGPPIEDAIASSDVLETASKSANPPHTIQASEEQSSTPAPVKKSGKLRQQIDVKAELEKRQGGKQLLNLVVIGHVDAGKSTLMGHMLYLLGNINKRTMHKYEQESKKAGKASFAYAWVLDETGEERERGVTMDVGMTKFETTTKVITLMDAPGHKDFIPNMITGAAQADVAVLVVDASRGEFEAGFETGGQTREHGLLVRSLGVTQLAVAVNKMDQVNWQQERFQEITGKLGHFLKQAGFKESDVGFIPTSGLSGENLITRSQSSELTKWYKGLCLLEQIDSFKPPQRSIDKPFRLCVSDVFKDQGSGFCITGKIEAGYIQTGDRLLAMPPNETCTVKGITLHDEPVDWAAAGDHVSLTLVGMDIIKINVGCIFCGPKVPIKACTRFRARILIFNIEIPITKGFPVLLHYQTVSEPAVIKRLISVLNKSTGEVTKKKPKFLTKGQNALVELQTQRPIALELYKDFKELGRFMLRYGGSTIAAGVVTEIKE</sequence>
<comment type="function">
    <text evidence="5 6 8 11">GTPase component of the Pelota-HBS1L complex, a complex that recognizes stalled ribosomes and triggers the No-Go Decay (NGD) pathway (PubMed:21448132, PubMed:23667253, PubMed:27863242). The Pelota-HBS1L complex recognizes ribosomes stalled at the 3' end of an mRNA and engages stalled ribosomes by destabilizing mRNA in the mRNA channel (PubMed:27863242). Following mRNA extraction from stalled ribosomes by the SKI complex, the Pelota-HBS1L complex promotes recruitment of ABCE1, which drives the disassembly of stalled ribosomes, followed by degradation of damaged mRNAs as part of the NGD pathway (PubMed:21448132, PubMed:32006463).</text>
</comment>
<comment type="catalytic activity">
    <reaction evidence="1">
        <text>GTP + H2O = GDP + phosphate + H(+)</text>
        <dbReference type="Rhea" id="RHEA:19669"/>
        <dbReference type="ChEBI" id="CHEBI:15377"/>
        <dbReference type="ChEBI" id="CHEBI:15378"/>
        <dbReference type="ChEBI" id="CHEBI:37565"/>
        <dbReference type="ChEBI" id="CHEBI:43474"/>
        <dbReference type="ChEBI" id="CHEBI:58189"/>
    </reaction>
    <physiologicalReaction direction="left-to-right" evidence="1">
        <dbReference type="Rhea" id="RHEA:19670"/>
    </physiologicalReaction>
</comment>
<comment type="subunit">
    <text evidence="6 8 9">Component of the Pelota-HBS1L complex, also named Dom34-Hbs1 complex, composed of PELO and HBS1L (PubMed:27863242). Interacts with the SKI complex (PubMed:23667253, PubMed:28204585).</text>
</comment>
<comment type="subunit">
    <molecule>Isoform 2</molecule>
    <text evidence="9">Associates with SKI complex; the interaction with SKIC2 is direct (PubMed:28204585). Associates with the exosome complex; the interaction with EXOSC3 is direct (PubMed:28204585).</text>
</comment>
<comment type="interaction">
    <interactant intactId="EBI-2868258">
        <id>Q9Y450</id>
    </interactant>
    <interactant intactId="EBI-1043580">
        <id>Q9BRX2</id>
        <label>PELO</label>
    </interactant>
    <organismsDiffer>false</organismsDiffer>
    <experiments>4</experiments>
</comment>
<comment type="subcellular location">
    <subcellularLocation>
        <location evidence="19">Cytoplasm</location>
    </subcellularLocation>
</comment>
<comment type="subcellular location">
    <molecule>Isoform 2</molecule>
    <subcellularLocation>
        <location evidence="9">Cytoplasm</location>
    </subcellularLocation>
</comment>
<comment type="alternative products">
    <event type="alternative splicing"/>
    <isoform>
        <id>Q9Y450-1</id>
        <name>1</name>
        <name evidence="15">HBS1LV1</name>
        <sequence type="displayed"/>
    </isoform>
    <isoform>
        <id>Q9Y450-2</id>
        <name>2</name>
        <name evidence="15">HBS1LV3</name>
        <sequence type="described" ref="VSP_013624"/>
    </isoform>
    <isoform>
        <id>Q9Y450-4</id>
        <name>3</name>
        <sequence type="described" ref="VSP_041068"/>
    </isoform>
</comment>
<comment type="tissue specificity">
    <text evidence="12">Detected in heart, brain, placenta, liver, muscle, kidney and pancreas.</text>
</comment>
<comment type="disease">
    <text evidence="7 10">Defects in HBS1L have been found in one patient with a developmental disorder characterized by growth restriction, facial dysmorphism and developmental delay (PubMed:24288412, PubMed:30707697). Additional pleiotropic features include sparse hair and eyebrows, deep-set eyes with blue sclerae, bifid uvula with a submucous cleft palate, velopharyngeal insufficiency, C2-C3 vertebral fusion, scoliosis, vesicoureteral reflux with a bladder diverticulum and significant hypotonia (PubMed:24288412, PubMed:30707697). Deficiency is caused by the complete absence of isoform 1 and isoform 3, while isoform 2 is relatively unaffected in this patient (PubMed:30707697).</text>
</comment>
<comment type="similarity">
    <text evidence="3">Belongs to the TRAFAC class translation factor GTPase superfamily. Classic translation factor GTPase family.</text>
</comment>
<evidence type="ECO:0000250" key="1">
    <source>
        <dbReference type="UniProtKB" id="P32769"/>
    </source>
</evidence>
<evidence type="ECO:0000250" key="2">
    <source>
        <dbReference type="UniProtKB" id="Q69ZS7"/>
    </source>
</evidence>
<evidence type="ECO:0000255" key="3">
    <source>
        <dbReference type="PROSITE-ProRule" id="PRU01059"/>
    </source>
</evidence>
<evidence type="ECO:0000256" key="4">
    <source>
        <dbReference type="SAM" id="MobiDB-lite"/>
    </source>
</evidence>
<evidence type="ECO:0000269" key="5">
    <source>
    </source>
</evidence>
<evidence type="ECO:0000269" key="6">
    <source>
    </source>
</evidence>
<evidence type="ECO:0000269" key="7">
    <source>
    </source>
</evidence>
<evidence type="ECO:0000269" key="8">
    <source>
    </source>
</evidence>
<evidence type="ECO:0000269" key="9">
    <source>
    </source>
</evidence>
<evidence type="ECO:0000269" key="10">
    <source>
    </source>
</evidence>
<evidence type="ECO:0000269" key="11">
    <source>
    </source>
</evidence>
<evidence type="ECO:0000269" key="12">
    <source>
    </source>
</evidence>
<evidence type="ECO:0000303" key="13">
    <source>
    </source>
</evidence>
<evidence type="ECO:0000303" key="14">
    <source>
    </source>
</evidence>
<evidence type="ECO:0000303" key="15">
    <source>
    </source>
</evidence>
<evidence type="ECO:0000303" key="16">
    <source>
    </source>
</evidence>
<evidence type="ECO:0000303" key="17">
    <source ref="2"/>
</evidence>
<evidence type="ECO:0000305" key="18"/>
<evidence type="ECO:0000305" key="19">
    <source>
    </source>
</evidence>
<evidence type="ECO:0000305" key="20">
    <source>
    </source>
</evidence>
<evidence type="ECO:0000312" key="21">
    <source>
        <dbReference type="HGNC" id="HGNC:4834"/>
    </source>
</evidence>
<evidence type="ECO:0007744" key="22">
    <source>
        <dbReference type="PDB" id="5LZW"/>
    </source>
</evidence>
<evidence type="ECO:0007744" key="23">
    <source>
        <dbReference type="PDB" id="5LZX"/>
    </source>
</evidence>
<evidence type="ECO:0007744" key="24">
    <source>
        <dbReference type="PDB" id="5LZY"/>
    </source>
</evidence>
<evidence type="ECO:0007744" key="25">
    <source>
        <dbReference type="PDB" id="5LZZ"/>
    </source>
</evidence>
<evidence type="ECO:0007744" key="26">
    <source>
    </source>
</evidence>
<evidence type="ECO:0007744" key="27">
    <source>
    </source>
</evidence>
<evidence type="ECO:0007744" key="28">
    <source>
    </source>
</evidence>
<evidence type="ECO:0007829" key="29">
    <source>
        <dbReference type="PDB" id="9G8R"/>
    </source>
</evidence>
<accession>Q9Y450</accession>
<accession>B7Z365</accession>
<accession>Q4VX89</accession>
<accession>Q4VX90</accession>
<accession>Q5T7G3</accession>
<accession>Q8NDW9</accession>
<accession>Q9UPW3</accession>
<keyword id="KW-0002">3D-structure</keyword>
<keyword id="KW-0007">Acetylation</keyword>
<keyword id="KW-0025">Alternative splicing</keyword>
<keyword id="KW-0963">Cytoplasm</keyword>
<keyword id="KW-0251">Elongation factor</keyword>
<keyword id="KW-0342">GTP-binding</keyword>
<keyword id="KW-0378">Hydrolase</keyword>
<keyword id="KW-0547">Nucleotide-binding</keyword>
<keyword id="KW-0597">Phosphoprotein</keyword>
<keyword id="KW-0648">Protein biosynthesis</keyword>
<keyword id="KW-1267">Proteomics identification</keyword>
<keyword id="KW-1185">Reference proteome</keyword>
<keyword id="KW-0810">Translation regulation</keyword>
<proteinExistence type="evidence at protein level"/>
<gene>
    <name evidence="15 21" type="primary">HBS1L</name>
    <name evidence="16" type="synonym">HBS1</name>
    <name evidence="13" type="synonym">KIAA1038</name>
</gene>
<protein>
    <recommendedName>
        <fullName evidence="18">HBS1-like protein</fullName>
        <ecNumber evidence="1">3.6.5.-</ecNumber>
    </recommendedName>
    <alternativeName>
        <fullName>ERFS</fullName>
    </alternativeName>
</protein>
<name>HBS1L_HUMAN</name>
<feature type="chain" id="PRO_0000091491" description="HBS1-like protein">
    <location>
        <begin position="1"/>
        <end position="684"/>
    </location>
</feature>
<feature type="domain" description="tr-type G" evidence="3">
    <location>
        <begin position="258"/>
        <end position="482"/>
    </location>
</feature>
<feature type="region of interest" description="Disordered" evidence="4">
    <location>
        <begin position="170"/>
        <end position="241"/>
    </location>
</feature>
<feature type="region of interest" description="G1" evidence="3">
    <location>
        <begin position="267"/>
        <end position="274"/>
    </location>
</feature>
<feature type="region of interest" description="G2" evidence="3">
    <location>
        <begin position="323"/>
        <end position="327"/>
    </location>
</feature>
<feature type="region of interest" description="G3" evidence="3">
    <location>
        <begin position="344"/>
        <end position="347"/>
    </location>
</feature>
<feature type="region of interest" description="G4" evidence="3">
    <location>
        <begin position="406"/>
        <end position="409"/>
    </location>
</feature>
<feature type="region of interest" description="G5" evidence="3">
    <location>
        <begin position="445"/>
        <end position="447"/>
    </location>
</feature>
<feature type="compositionally biased region" description="Polar residues" evidence="4">
    <location>
        <begin position="212"/>
        <end position="232"/>
    </location>
</feature>
<feature type="binding site" evidence="20 22">
    <location>
        <begin position="267"/>
        <end position="274"/>
    </location>
    <ligand>
        <name>GTP</name>
        <dbReference type="ChEBI" id="CHEBI:37565"/>
    </ligand>
</feature>
<feature type="binding site" evidence="20 22">
    <location>
        <begin position="406"/>
        <end position="409"/>
    </location>
    <ligand>
        <name>GTP</name>
        <dbReference type="ChEBI" id="CHEBI:37565"/>
    </ligand>
</feature>
<feature type="binding site" evidence="20 22">
    <location>
        <begin position="445"/>
        <end position="447"/>
    </location>
    <ligand>
        <name>GTP</name>
        <dbReference type="ChEBI" id="CHEBI:37565"/>
    </ligand>
</feature>
<feature type="modified residue" description="Phosphoserine" evidence="28">
    <location>
        <position position="49"/>
    </location>
</feature>
<feature type="modified residue" description="Phosphoserine" evidence="28">
    <location>
        <position position="67"/>
    </location>
</feature>
<feature type="modified residue" description="Phosphoserine" evidence="27">
    <location>
        <position position="117"/>
    </location>
</feature>
<feature type="modified residue" description="Phosphoserine" evidence="27 28">
    <location>
        <position position="127"/>
    </location>
</feature>
<feature type="modified residue" description="Phosphoserine" evidence="2">
    <location>
        <position position="152"/>
    </location>
</feature>
<feature type="modified residue" description="Phosphoserine" evidence="28">
    <location>
        <position position="154"/>
    </location>
</feature>
<feature type="modified residue" description="Phosphothreonine" evidence="28">
    <location>
        <position position="231"/>
    </location>
</feature>
<feature type="modified residue" description="N6-acetyllysine" evidence="2">
    <location>
        <position position="622"/>
    </location>
</feature>
<feature type="splice variant" id="VSP_041068" description="In isoform 3." evidence="14">
    <location>
        <begin position="37"/>
        <end position="78"/>
    </location>
</feature>
<feature type="splice variant" id="VSP_013624" description="In isoform 2." evidence="17">
    <original>KPVDSQTSRSESEIVPKVAKMTVSGKKQTMGFEVPGVSSEENGHSFHTPQKGPPIEDAIASSDVLETASKSANPPHTIQASEEQSSTPAPVKKSGKLRQQIDVKAELEKRQGGKQLLNLVVIGHVDAGKSTLMGHMLYLLGNINKRTMHKYEQESKKAGKASFAYAWVLDETGEERERGVTMDVGMTKFETTTKVITLMDAPGHKDFIPNMITGAAQADVAVLVVDASRGEFEAGFETGGQTREHGLLVRSLGVTQLAVAVNKMDQVNWQQERFQEITGKLGHFLKQAGFKESDVGFIPTSGLSGENLITRSQSSELTKWYKGLCLLEQIDSFKPPQRSIDKPFRLCVSDVFKDQGSGFCITGKIEAGYIQTGDRLLAMPPNETCTVKGITLHDEPVDWAAAGDHVSLTLVGMDIIKINVGCIFCGPKVPIKACTRFRARILIFNIEIPITKGFPVLLHYQTVSEPAVIKRLISVLNKSTGEVTKKKPKFLTKGQNALVELQTQRPIALELYKDFKELGRFMLRYGGSTIAAGVVTEIKE</original>
    <variation>VLFSSSEVSADNVQSSYPQSANHLDYSSKPFDFASSVGKYGLSHNSSVPTHCLLHRKKKLDTRKSEKKLESCKLTKELSLANLIHDMSRDSCESQPSVRLSSTDSLESLLSKNLDADLLRPHASECISKDDSAFKEIPDLKTIIIKGTTPNNSLYIQNNSLSDFQNIPVQDSLGSSNNPLYLTSSLENMTVDNLNASKETEVGNVSLVEQSAKNHTFKNDNLQFSQCESPSLTELFQEHKENNISQCFTLSDLCNQSSASFTDLSLGSFPLSQLANRCQSSPGISELTGSLSSLAFHKASPTRDLENLSLSELIAETIDVDNSQIKKESFEVSLSEVRSPGIDSNIDLSVLIKNPDFVPKPVVDPSIAPSSRTKVLSSKLGKNSNFAKDNKKNNKGSLTRKPPFSLSWTKALAARPSAFASTLCLRYPLKSCKRRTLDLYKTFLYSRQVQDVKDKEISPLVAITPFDFKSASPDDIVKANQKKAFTRE</variation>
    <location>
        <begin position="145"/>
        <end position="684"/>
    </location>
</feature>
<feature type="sequence variant" id="VAR_048963" description="In dbSNP:rs4435957.">
    <original>G</original>
    <variation>S</variation>
    <location>
        <position position="440"/>
    </location>
</feature>
<feature type="sequence variant" id="VAR_087990" description="Found in a patient with developmental disorder; uncertain significance." evidence="7 10">
    <location>
        <begin position="615"/>
        <end position="684"/>
    </location>
</feature>
<feature type="helix" evidence="29">
    <location>
        <begin position="155"/>
        <end position="164"/>
    </location>
</feature>
<feature type="region of interest" description="Interaction with the exosome complex" evidence="9">
    <location sequence="Q9Y450-2">
        <begin position="546"/>
        <end position="572"/>
    </location>
</feature>
<feature type="modified residue" description="Phosphoserine" evidence="26">
    <location sequence="Q9Y450-2">
        <position position="246"/>
    </location>
</feature>